<evidence type="ECO:0000250" key="1">
    <source>
        <dbReference type="UniProtKB" id="O24146"/>
    </source>
</evidence>
<evidence type="ECO:0000250" key="2">
    <source>
        <dbReference type="UniProtKB" id="Q42524"/>
    </source>
</evidence>
<evidence type="ECO:0000255" key="3"/>
<evidence type="ECO:0000269" key="4">
    <source>
    </source>
</evidence>
<evidence type="ECO:0000269" key="5">
    <source>
    </source>
</evidence>
<evidence type="ECO:0000303" key="6">
    <source>
    </source>
</evidence>
<evidence type="ECO:0000305" key="7"/>
<evidence type="ECO:0000312" key="8">
    <source>
        <dbReference type="Araport" id="AT4G05160"/>
    </source>
</evidence>
<evidence type="ECO:0000312" key="9">
    <source>
        <dbReference type="EMBL" id="CAB81058.1"/>
    </source>
</evidence>
<keyword id="KW-0067">ATP-binding</keyword>
<keyword id="KW-0275">Fatty acid biosynthesis</keyword>
<keyword id="KW-0276">Fatty acid metabolism</keyword>
<keyword id="KW-0436">Ligase</keyword>
<keyword id="KW-0444">Lipid biosynthesis</keyword>
<keyword id="KW-0443">Lipid metabolism</keyword>
<keyword id="KW-0460">Magnesium</keyword>
<keyword id="KW-0547">Nucleotide-binding</keyword>
<keyword id="KW-0925">Oxylipin biosynthesis</keyword>
<keyword id="KW-0576">Peroxisome</keyword>
<keyword id="KW-1185">Reference proteome</keyword>
<sequence>MEKSGYGRDGIYRSLRPTLVLPKDPNTSLVSFLFRNSSSYPSKLAIADSDTGDSLTFSQLKSAVARLAHGFHRLGIRKNDVVLIFAPNSYQFPLCFLAVTAIGGVFTTANPLYTVNEVSKQIKDSNPKIIISVNQLFDKIKGFDLPVVLLGSKDTVEIPPGSNSKILSFDNVMELSEPVSEYPFVEIKQSDTAALLYSSGTTGTSKGVELTHGNFIAASLMVTMDQDLMGEYHGVFLCFLPMFHVFGLAVITYSQLQRGNALVSMARFELELVLKNIEKFRVTHLWVVPPVFLALSKQSIVKKFDLSSLKYIGSGAAPLGKDLMEECGRNIPNVLLMQGYGMTETCGIVSVEDPRLGKRNSGSAGMLAPGVEAQIVSVETGKSQPPNQQGEIWVRGPNMMKGYLNNPQATKETIDKKSWVHTGDLGYFNEDGNLYVVDRIKELIKYKGFQVAPAELEGLLVSHPDILDAVVIPFPDEEAGEVPIAFVVRSPNSSITEQDIQKFIAKQVAPYKRLRRVSFISLVPKSAAGKILRRELVQQVRSKM</sequence>
<reference key="1">
    <citation type="journal article" date="2003" name="Plant Physiol.">
        <title>Arabidopsis contains a large superfamily of acyl-activating enzymes. Phylogenetic and biochemical analysis reveals a new class of acyl-coenzyme a synthetases.</title>
        <authorList>
            <person name="Shockey J.M."/>
            <person name="Fulda M.S."/>
            <person name="Browse J."/>
        </authorList>
    </citation>
    <scope>NUCLEOTIDE SEQUENCE [MRNA]</scope>
    <scope>GENE FAMILY ORGANIZATION</scope>
    <source>
        <strain>cv. Wassilewskija</strain>
    </source>
</reference>
<reference key="2">
    <citation type="journal article" date="1999" name="Nature">
        <title>Sequence and analysis of chromosome 4 of the plant Arabidopsis thaliana.</title>
        <authorList>
            <person name="Mayer K.F.X."/>
            <person name="Schueller C."/>
            <person name="Wambutt R."/>
            <person name="Murphy G."/>
            <person name="Volckaert G."/>
            <person name="Pohl T."/>
            <person name="Duesterhoeft A."/>
            <person name="Stiekema W."/>
            <person name="Entian K.-D."/>
            <person name="Terryn N."/>
            <person name="Harris B."/>
            <person name="Ansorge W."/>
            <person name="Brandt P."/>
            <person name="Grivell L.A."/>
            <person name="Rieger M."/>
            <person name="Weichselgartner M."/>
            <person name="de Simone V."/>
            <person name="Obermaier B."/>
            <person name="Mache R."/>
            <person name="Mueller M."/>
            <person name="Kreis M."/>
            <person name="Delseny M."/>
            <person name="Puigdomenech P."/>
            <person name="Watson M."/>
            <person name="Schmidtheini T."/>
            <person name="Reichert B."/>
            <person name="Portetelle D."/>
            <person name="Perez-Alonso M."/>
            <person name="Boutry M."/>
            <person name="Bancroft I."/>
            <person name="Vos P."/>
            <person name="Hoheisel J."/>
            <person name="Zimmermann W."/>
            <person name="Wedler H."/>
            <person name="Ridley P."/>
            <person name="Langham S.-A."/>
            <person name="McCullagh B."/>
            <person name="Bilham L."/>
            <person name="Robben J."/>
            <person name="van der Schueren J."/>
            <person name="Grymonprez B."/>
            <person name="Chuang Y.-J."/>
            <person name="Vandenbussche F."/>
            <person name="Braeken M."/>
            <person name="Weltjens I."/>
            <person name="Voet M."/>
            <person name="Bastiaens I."/>
            <person name="Aert R."/>
            <person name="Defoor E."/>
            <person name="Weitzenegger T."/>
            <person name="Bothe G."/>
            <person name="Ramsperger U."/>
            <person name="Hilbert H."/>
            <person name="Braun M."/>
            <person name="Holzer E."/>
            <person name="Brandt A."/>
            <person name="Peters S."/>
            <person name="van Staveren M."/>
            <person name="Dirkse W."/>
            <person name="Mooijman P."/>
            <person name="Klein Lankhorst R."/>
            <person name="Rose M."/>
            <person name="Hauf J."/>
            <person name="Koetter P."/>
            <person name="Berneiser S."/>
            <person name="Hempel S."/>
            <person name="Feldpausch M."/>
            <person name="Lamberth S."/>
            <person name="Van den Daele H."/>
            <person name="De Keyser A."/>
            <person name="Buysshaert C."/>
            <person name="Gielen J."/>
            <person name="Villarroel R."/>
            <person name="De Clercq R."/>
            <person name="van Montagu M."/>
            <person name="Rogers J."/>
            <person name="Cronin A."/>
            <person name="Quail M.A."/>
            <person name="Bray-Allen S."/>
            <person name="Clark L."/>
            <person name="Doggett J."/>
            <person name="Hall S."/>
            <person name="Kay M."/>
            <person name="Lennard N."/>
            <person name="McLay K."/>
            <person name="Mayes R."/>
            <person name="Pettett A."/>
            <person name="Rajandream M.A."/>
            <person name="Lyne M."/>
            <person name="Benes V."/>
            <person name="Rechmann S."/>
            <person name="Borkova D."/>
            <person name="Bloecker H."/>
            <person name="Scharfe M."/>
            <person name="Grimm M."/>
            <person name="Loehnert T.-H."/>
            <person name="Dose S."/>
            <person name="de Haan M."/>
            <person name="Maarse A.C."/>
            <person name="Schaefer M."/>
            <person name="Mueller-Auer S."/>
            <person name="Gabel C."/>
            <person name="Fuchs M."/>
            <person name="Fartmann B."/>
            <person name="Granderath K."/>
            <person name="Dauner D."/>
            <person name="Herzl A."/>
            <person name="Neumann S."/>
            <person name="Argiriou A."/>
            <person name="Vitale D."/>
            <person name="Liguori R."/>
            <person name="Piravandi E."/>
            <person name="Massenet O."/>
            <person name="Quigley F."/>
            <person name="Clabauld G."/>
            <person name="Muendlein A."/>
            <person name="Felber R."/>
            <person name="Schnabl S."/>
            <person name="Hiller R."/>
            <person name="Schmidt W."/>
            <person name="Lecharny A."/>
            <person name="Aubourg S."/>
            <person name="Chefdor F."/>
            <person name="Cooke R."/>
            <person name="Berger C."/>
            <person name="Monfort A."/>
            <person name="Casacuberta E."/>
            <person name="Gibbons T."/>
            <person name="Weber N."/>
            <person name="Vandenbol M."/>
            <person name="Bargues M."/>
            <person name="Terol J."/>
            <person name="Torres A."/>
            <person name="Perez-Perez A."/>
            <person name="Purnelle B."/>
            <person name="Bent E."/>
            <person name="Johnson S."/>
            <person name="Tacon D."/>
            <person name="Jesse T."/>
            <person name="Heijnen L."/>
            <person name="Schwarz S."/>
            <person name="Scholler P."/>
            <person name="Heber S."/>
            <person name="Francs P."/>
            <person name="Bielke C."/>
            <person name="Frishman D."/>
            <person name="Haase D."/>
            <person name="Lemcke K."/>
            <person name="Mewes H.-W."/>
            <person name="Stocker S."/>
            <person name="Zaccaria P."/>
            <person name="Bevan M."/>
            <person name="Wilson R.K."/>
            <person name="de la Bastide M."/>
            <person name="Habermann K."/>
            <person name="Parnell L."/>
            <person name="Dedhia N."/>
            <person name="Gnoj L."/>
            <person name="Schutz K."/>
            <person name="Huang E."/>
            <person name="Spiegel L."/>
            <person name="Sekhon M."/>
            <person name="Murray J."/>
            <person name="Sheet P."/>
            <person name="Cordes M."/>
            <person name="Abu-Threideh J."/>
            <person name="Stoneking T."/>
            <person name="Kalicki J."/>
            <person name="Graves T."/>
            <person name="Harmon G."/>
            <person name="Edwards J."/>
            <person name="Latreille P."/>
            <person name="Courtney L."/>
            <person name="Cloud J."/>
            <person name="Abbott A."/>
            <person name="Scott K."/>
            <person name="Johnson D."/>
            <person name="Minx P."/>
            <person name="Bentley D."/>
            <person name="Fulton B."/>
            <person name="Miller N."/>
            <person name="Greco T."/>
            <person name="Kemp K."/>
            <person name="Kramer J."/>
            <person name="Fulton L."/>
            <person name="Mardis E."/>
            <person name="Dante M."/>
            <person name="Pepin K."/>
            <person name="Hillier L.W."/>
            <person name="Nelson J."/>
            <person name="Spieth J."/>
            <person name="Ryan E."/>
            <person name="Andrews S."/>
            <person name="Geisel C."/>
            <person name="Layman D."/>
            <person name="Du H."/>
            <person name="Ali J."/>
            <person name="Berghoff A."/>
            <person name="Jones K."/>
            <person name="Drone K."/>
            <person name="Cotton M."/>
            <person name="Joshu C."/>
            <person name="Antonoiu B."/>
            <person name="Zidanic M."/>
            <person name="Strong C."/>
            <person name="Sun H."/>
            <person name="Lamar B."/>
            <person name="Yordan C."/>
            <person name="Ma P."/>
            <person name="Zhong J."/>
            <person name="Preston R."/>
            <person name="Vil D."/>
            <person name="Shekher M."/>
            <person name="Matero A."/>
            <person name="Shah R."/>
            <person name="Swaby I.K."/>
            <person name="O'Shaughnessy A."/>
            <person name="Rodriguez M."/>
            <person name="Hoffman J."/>
            <person name="Till S."/>
            <person name="Granat S."/>
            <person name="Shohdy N."/>
            <person name="Hasegawa A."/>
            <person name="Hameed A."/>
            <person name="Lodhi M."/>
            <person name="Johnson A."/>
            <person name="Chen E."/>
            <person name="Marra M.A."/>
            <person name="Martienssen R."/>
            <person name="McCombie W.R."/>
        </authorList>
    </citation>
    <scope>NUCLEOTIDE SEQUENCE [LARGE SCALE GENOMIC DNA]</scope>
    <source>
        <strain>cv. Columbia</strain>
    </source>
</reference>
<reference key="3">
    <citation type="journal article" date="2017" name="Plant J.">
        <title>Araport11: a complete reannotation of the Arabidopsis thaliana reference genome.</title>
        <authorList>
            <person name="Cheng C.Y."/>
            <person name="Krishnakumar V."/>
            <person name="Chan A.P."/>
            <person name="Thibaud-Nissen F."/>
            <person name="Schobel S."/>
            <person name="Town C.D."/>
        </authorList>
    </citation>
    <scope>GENOME REANNOTATION</scope>
    <source>
        <strain>cv. Columbia</strain>
    </source>
</reference>
<reference key="4">
    <citation type="journal article" date="2003" name="Science">
        <title>Empirical analysis of transcriptional activity in the Arabidopsis genome.</title>
        <authorList>
            <person name="Yamada K."/>
            <person name="Lim J."/>
            <person name="Dale J.M."/>
            <person name="Chen H."/>
            <person name="Shinn P."/>
            <person name="Palm C.J."/>
            <person name="Southwick A.M."/>
            <person name="Wu H.C."/>
            <person name="Kim C.J."/>
            <person name="Nguyen M."/>
            <person name="Pham P.K."/>
            <person name="Cheuk R.F."/>
            <person name="Karlin-Newmann G."/>
            <person name="Liu S.X."/>
            <person name="Lam B."/>
            <person name="Sakano H."/>
            <person name="Wu T."/>
            <person name="Yu G."/>
            <person name="Miranda M."/>
            <person name="Quach H.L."/>
            <person name="Tripp M."/>
            <person name="Chang C.H."/>
            <person name="Lee J.M."/>
            <person name="Toriumi M.J."/>
            <person name="Chan M.M."/>
            <person name="Tang C.C."/>
            <person name="Onodera C.S."/>
            <person name="Deng J.M."/>
            <person name="Akiyama K."/>
            <person name="Ansari Y."/>
            <person name="Arakawa T."/>
            <person name="Banh J."/>
            <person name="Banno F."/>
            <person name="Bowser L."/>
            <person name="Brooks S.Y."/>
            <person name="Carninci P."/>
            <person name="Chao Q."/>
            <person name="Choy N."/>
            <person name="Enju A."/>
            <person name="Goldsmith A.D."/>
            <person name="Gurjal M."/>
            <person name="Hansen N.F."/>
            <person name="Hayashizaki Y."/>
            <person name="Johnson-Hopson C."/>
            <person name="Hsuan V.W."/>
            <person name="Iida K."/>
            <person name="Karnes M."/>
            <person name="Khan S."/>
            <person name="Koesema E."/>
            <person name="Ishida J."/>
            <person name="Jiang P.X."/>
            <person name="Jones T."/>
            <person name="Kawai J."/>
            <person name="Kamiya A."/>
            <person name="Meyers C."/>
            <person name="Nakajima M."/>
            <person name="Narusaka M."/>
            <person name="Seki M."/>
            <person name="Sakurai T."/>
            <person name="Satou M."/>
            <person name="Tamse R."/>
            <person name="Vaysberg M."/>
            <person name="Wallender E.K."/>
            <person name="Wong C."/>
            <person name="Yamamura Y."/>
            <person name="Yuan S."/>
            <person name="Shinozaki K."/>
            <person name="Davis R.W."/>
            <person name="Theologis A."/>
            <person name="Ecker J.R."/>
        </authorList>
    </citation>
    <scope>NUCLEOTIDE SEQUENCE [LARGE SCALE MRNA]</scope>
    <source>
        <strain>cv. Columbia</strain>
    </source>
</reference>
<reference key="5">
    <citation type="journal article" date="2003" name="Proc. Natl. Acad. Sci. U.S.A.">
        <title>The substrate specificity-determining amino acid code of 4-coumarate:CoA ligase.</title>
        <authorList>
            <person name="Schneider K."/>
            <person name="Hoevel K."/>
            <person name="Witzel K."/>
            <person name="Hamberger B."/>
            <person name="Schomburg D."/>
            <person name="Kombrink E."/>
            <person name="Stuible H.-P."/>
        </authorList>
    </citation>
    <scope>GENE FAMILY ORGANIZATION</scope>
</reference>
<reference key="6">
    <citation type="journal article" date="2005" name="J. Biol. Chem.">
        <title>A new type of peroxisomal acyl-coenzyme A synthetase from Arabidopsis thaliana has the catalytic capacity to activate biosynthetic precursors of jasmonic acid.</title>
        <authorList>
            <person name="Schneider K."/>
            <person name="Kienow L."/>
            <person name="Schmelzer E."/>
            <person name="Colby T."/>
            <person name="Bartsch M."/>
            <person name="Miersch O."/>
            <person name="Wasternack C."/>
            <person name="Kombrink E."/>
            <person name="Stuible H.-P."/>
        </authorList>
    </citation>
    <scope>FUNCTION</scope>
    <scope>CATALYTIC ACTIVITY</scope>
    <scope>SUBCELLULAR LOCATION</scope>
    <scope>INDUCTION</scope>
    <scope>BIOPHYSICOCHEMICAL PROPERTIES</scope>
</reference>
<reference key="7">
    <citation type="journal article" date="2007" name="Mol. Cell. Proteomics">
        <title>Multidimensional protein identification technology (MudPIT) analysis of ubiquitinated proteins in plants.</title>
        <authorList>
            <person name="Maor R."/>
            <person name="Jones A."/>
            <person name="Nuehse T.S."/>
            <person name="Studholme D.J."/>
            <person name="Peck S.C."/>
            <person name="Shirasu K."/>
        </authorList>
    </citation>
    <scope>IDENTIFICATION BY MASS SPECTROMETRY [LARGE SCALE ANALYSIS]</scope>
    <source>
        <strain>cv. Landsberg erecta</strain>
    </source>
</reference>
<reference key="8">
    <citation type="journal article" date="2007" name="Plant Cell">
        <title>Proteome analysis of Arabidopsis leaf peroxisomes reveals novel targeting peptides, metabolic pathways, and defense mechanisms.</title>
        <authorList>
            <person name="Reumann S."/>
            <person name="Babujee L."/>
            <person name="Ma C."/>
            <person name="Wienkoop S."/>
            <person name="Siemsen T."/>
            <person name="Antonicelli G.E."/>
            <person name="Rasche N."/>
            <person name="Lueder F."/>
            <person name="Weckwerth W."/>
            <person name="Jahn O."/>
        </authorList>
    </citation>
    <scope>IDENTIFICATION BY MASS SPECTROMETRY</scope>
</reference>
<reference key="9">
    <citation type="journal article" date="2008" name="J. Exp. Bot.">
        <title>Jasmonates meet fatty acids: functional analysis of a new acyl-coenzyme A synthetase family from Arabidopsis thaliana.</title>
        <authorList>
            <person name="Kienow L."/>
            <person name="Schneider K."/>
            <person name="Bartsch M."/>
            <person name="Stuible H.-P."/>
            <person name="Weng H."/>
            <person name="Miersch O."/>
            <person name="Wasternack C."/>
            <person name="Kombrink E."/>
        </authorList>
    </citation>
    <scope>FUNCTION</scope>
    <scope>DISRUPTION PHENOTYPE</scope>
    <scope>CATALYTIC ACTIVITY</scope>
    <scope>BIOPHYSICOCHEMICAL PROPERTIES</scope>
    <scope>TISSUE SPECIFICITY</scope>
</reference>
<feature type="chain" id="PRO_0000299180" description="4-coumarate--CoA ligase-like 7">
    <location>
        <begin position="1"/>
        <end position="544"/>
    </location>
</feature>
<feature type="region of interest" description="SBD1" evidence="2">
    <location>
        <begin position="269"/>
        <end position="338"/>
    </location>
</feature>
<feature type="region of interest" description="SBD2" evidence="2">
    <location>
        <begin position="339"/>
        <end position="403"/>
    </location>
</feature>
<feature type="short sequence motif" description="Microbody targeting signal" evidence="3">
    <location>
        <begin position="542"/>
        <end position="544"/>
    </location>
</feature>
<feature type="binding site" evidence="1">
    <location>
        <position position="198"/>
    </location>
    <ligand>
        <name>ATP</name>
        <dbReference type="ChEBI" id="CHEBI:30616"/>
    </ligand>
</feature>
<feature type="binding site" evidence="1">
    <location>
        <position position="199"/>
    </location>
    <ligand>
        <name>ATP</name>
        <dbReference type="ChEBI" id="CHEBI:30616"/>
    </ligand>
</feature>
<feature type="binding site" evidence="1">
    <location>
        <position position="200"/>
    </location>
    <ligand>
        <name>ATP</name>
        <dbReference type="ChEBI" id="CHEBI:30616"/>
    </ligand>
</feature>
<feature type="binding site" evidence="1">
    <location>
        <position position="201"/>
    </location>
    <ligand>
        <name>ATP</name>
        <dbReference type="ChEBI" id="CHEBI:30616"/>
    </ligand>
</feature>
<feature type="binding site" evidence="1">
    <location>
        <position position="202"/>
    </location>
    <ligand>
        <name>ATP</name>
        <dbReference type="ChEBI" id="CHEBI:30616"/>
    </ligand>
</feature>
<feature type="binding site" evidence="1">
    <location>
        <position position="206"/>
    </location>
    <ligand>
        <name>ATP</name>
        <dbReference type="ChEBI" id="CHEBI:30616"/>
    </ligand>
</feature>
<feature type="binding site" evidence="1">
    <location>
        <position position="267"/>
    </location>
    <ligand>
        <name>CoA</name>
        <dbReference type="ChEBI" id="CHEBI:57287"/>
    </ligand>
</feature>
<feature type="binding site" evidence="1">
    <location>
        <position position="338"/>
    </location>
    <ligand>
        <name>ATP</name>
        <dbReference type="ChEBI" id="CHEBI:30616"/>
    </ligand>
</feature>
<feature type="binding site" evidence="1">
    <location>
        <position position="339"/>
    </location>
    <ligand>
        <name>ATP</name>
        <dbReference type="ChEBI" id="CHEBI:30616"/>
    </ligand>
</feature>
<feature type="binding site" evidence="1">
    <location>
        <position position="343"/>
    </location>
    <ligand>
        <name>ATP</name>
        <dbReference type="ChEBI" id="CHEBI:30616"/>
    </ligand>
</feature>
<feature type="binding site" evidence="1">
    <location>
        <position position="424"/>
    </location>
    <ligand>
        <name>ATP</name>
        <dbReference type="ChEBI" id="CHEBI:30616"/>
    </ligand>
</feature>
<feature type="binding site" evidence="1">
    <location>
        <position position="439"/>
    </location>
    <ligand>
        <name>ATP</name>
        <dbReference type="ChEBI" id="CHEBI:30616"/>
    </ligand>
</feature>
<feature type="binding site" evidence="1">
    <location>
        <position position="447"/>
    </location>
    <ligand>
        <name>CoA</name>
        <dbReference type="ChEBI" id="CHEBI:57287"/>
    </ligand>
</feature>
<feature type="binding site" evidence="1">
    <location>
        <position position="448"/>
    </location>
    <ligand>
        <name>CoA</name>
        <dbReference type="ChEBI" id="CHEBI:57287"/>
    </ligand>
</feature>
<feature type="binding site" evidence="1">
    <location>
        <position position="530"/>
    </location>
    <ligand>
        <name>ATP</name>
        <dbReference type="ChEBI" id="CHEBI:30616"/>
    </ligand>
</feature>
<dbReference type="EC" id="6.2.1.-" evidence="4 5"/>
<dbReference type="EMBL" id="AY250839">
    <property type="protein sequence ID" value="AAP03022.1"/>
    <property type="molecule type" value="mRNA"/>
</dbReference>
<dbReference type="EMBL" id="AL161502">
    <property type="protein sequence ID" value="CAB81058.1"/>
    <property type="molecule type" value="Genomic_DNA"/>
</dbReference>
<dbReference type="EMBL" id="CP002687">
    <property type="protein sequence ID" value="AEE82486.1"/>
    <property type="molecule type" value="Genomic_DNA"/>
</dbReference>
<dbReference type="EMBL" id="AY091079">
    <property type="protein sequence ID" value="AAM13899.1"/>
    <property type="molecule type" value="mRNA"/>
</dbReference>
<dbReference type="EMBL" id="AY122950">
    <property type="protein sequence ID" value="AAM67483.1"/>
    <property type="molecule type" value="mRNA"/>
</dbReference>
<dbReference type="PIR" id="H85064">
    <property type="entry name" value="H85064"/>
</dbReference>
<dbReference type="RefSeq" id="NP_192425.1">
    <property type="nucleotide sequence ID" value="NM_116755.5"/>
</dbReference>
<dbReference type="SMR" id="Q9M0X9"/>
<dbReference type="FunCoup" id="Q9M0X9">
    <property type="interactions" value="3046"/>
</dbReference>
<dbReference type="STRING" id="3702.Q9M0X9"/>
<dbReference type="SwissLipids" id="SLP:000001791"/>
<dbReference type="PaxDb" id="3702-AT4G05160.1"/>
<dbReference type="ProteomicsDB" id="243266"/>
<dbReference type="DNASU" id="825864"/>
<dbReference type="EnsemblPlants" id="AT4G05160.1">
    <property type="protein sequence ID" value="AT4G05160.1"/>
    <property type="gene ID" value="AT4G05160"/>
</dbReference>
<dbReference type="GeneID" id="825864"/>
<dbReference type="Gramene" id="AT4G05160.1">
    <property type="protein sequence ID" value="AT4G05160.1"/>
    <property type="gene ID" value="AT4G05160"/>
</dbReference>
<dbReference type="KEGG" id="ath:AT4G05160"/>
<dbReference type="Araport" id="AT4G05160"/>
<dbReference type="TAIR" id="AT4G05160"/>
<dbReference type="eggNOG" id="KOG1176">
    <property type="taxonomic scope" value="Eukaryota"/>
</dbReference>
<dbReference type="HOGENOM" id="CLU_000022_59_2_1"/>
<dbReference type="InParanoid" id="Q9M0X9"/>
<dbReference type="OMA" id="PFNWALD"/>
<dbReference type="OrthoDB" id="10253869at2759"/>
<dbReference type="PhylomeDB" id="Q9M0X9"/>
<dbReference type="BioCyc" id="ARA:AT4G05160-MONOMER"/>
<dbReference type="BioCyc" id="MetaCyc:AT4G05160-MONOMER"/>
<dbReference type="SABIO-RK" id="Q9M0X9"/>
<dbReference type="PRO" id="PR:Q9M0X9"/>
<dbReference type="Proteomes" id="UP000006548">
    <property type="component" value="Chromosome 4"/>
</dbReference>
<dbReference type="ExpressionAtlas" id="Q9M0X9">
    <property type="expression patterns" value="baseline and differential"/>
</dbReference>
<dbReference type="GO" id="GO:0005777">
    <property type="term" value="C:peroxisome"/>
    <property type="evidence" value="ECO:0000314"/>
    <property type="project" value="TAIR"/>
</dbReference>
<dbReference type="GO" id="GO:0005524">
    <property type="term" value="F:ATP binding"/>
    <property type="evidence" value="ECO:0007669"/>
    <property type="project" value="UniProtKB-KW"/>
</dbReference>
<dbReference type="GO" id="GO:0004321">
    <property type="term" value="F:fatty-acyl-CoA synthase activity"/>
    <property type="evidence" value="ECO:0000314"/>
    <property type="project" value="TAIR"/>
</dbReference>
<dbReference type="GO" id="GO:0016874">
    <property type="term" value="F:ligase activity"/>
    <property type="evidence" value="ECO:0007669"/>
    <property type="project" value="UniProtKB-KW"/>
</dbReference>
<dbReference type="GO" id="GO:0009695">
    <property type="term" value="P:jasmonic acid biosynthetic process"/>
    <property type="evidence" value="ECO:0000314"/>
    <property type="project" value="TAIR"/>
</dbReference>
<dbReference type="GO" id="GO:0031408">
    <property type="term" value="P:oxylipin biosynthetic process"/>
    <property type="evidence" value="ECO:0007669"/>
    <property type="project" value="UniProtKB-KW"/>
</dbReference>
<dbReference type="CDD" id="cd05904">
    <property type="entry name" value="4CL"/>
    <property type="match status" value="1"/>
</dbReference>
<dbReference type="FunFam" id="3.30.300.30:FF:000007">
    <property type="entry name" value="4-coumarate--CoA ligase 2"/>
    <property type="match status" value="1"/>
</dbReference>
<dbReference type="FunFam" id="3.40.50.12780:FF:000003">
    <property type="entry name" value="Long-chain-fatty-acid--CoA ligase FadD"/>
    <property type="match status" value="1"/>
</dbReference>
<dbReference type="Gene3D" id="3.30.300.30">
    <property type="match status" value="1"/>
</dbReference>
<dbReference type="Gene3D" id="3.40.50.12780">
    <property type="entry name" value="N-terminal domain of ligase-like"/>
    <property type="match status" value="1"/>
</dbReference>
<dbReference type="InterPro" id="IPR025110">
    <property type="entry name" value="AMP-bd_C"/>
</dbReference>
<dbReference type="InterPro" id="IPR045851">
    <property type="entry name" value="AMP-bd_C_sf"/>
</dbReference>
<dbReference type="InterPro" id="IPR020845">
    <property type="entry name" value="AMP-binding_CS"/>
</dbReference>
<dbReference type="InterPro" id="IPR000873">
    <property type="entry name" value="AMP-dep_synth/lig_dom"/>
</dbReference>
<dbReference type="InterPro" id="IPR042099">
    <property type="entry name" value="ANL_N_sf"/>
</dbReference>
<dbReference type="PANTHER" id="PTHR24096:SF425">
    <property type="entry name" value="4-COUMARATE--COA LIGASE-LIKE 7"/>
    <property type="match status" value="1"/>
</dbReference>
<dbReference type="PANTHER" id="PTHR24096">
    <property type="entry name" value="LONG-CHAIN-FATTY-ACID--COA LIGASE"/>
    <property type="match status" value="1"/>
</dbReference>
<dbReference type="Pfam" id="PF00501">
    <property type="entry name" value="AMP-binding"/>
    <property type="match status" value="1"/>
</dbReference>
<dbReference type="Pfam" id="PF13193">
    <property type="entry name" value="AMP-binding_C"/>
    <property type="match status" value="1"/>
</dbReference>
<dbReference type="SUPFAM" id="SSF56801">
    <property type="entry name" value="Acetyl-CoA synthetase-like"/>
    <property type="match status" value="1"/>
</dbReference>
<dbReference type="PROSITE" id="PS00455">
    <property type="entry name" value="AMP_BINDING"/>
    <property type="match status" value="1"/>
</dbReference>
<proteinExistence type="evidence at protein level"/>
<comment type="function">
    <text evidence="1 4 5">Contributes to jasmonic acid biosynthesis by initiating the beta-oxidative chain shortening of its precursors (PubMed:15677481, PubMed:18267944). Acts as a carboxylate--CoA ligase that can use various carboxylates as substrates (PubMed:15677481, PubMed:18267944). Follows a two-step reaction mechanism, wherein the carboxylate substrate first undergoes adenylation by ATP, followed by a thioesterification in the presence of CoA to yield the final CoA thioester (By similarity).</text>
</comment>
<comment type="catalytic activity">
    <reaction evidence="5">
        <text>hexadecanoate + ATP + CoA = hexadecanoyl-CoA + AMP + diphosphate</text>
        <dbReference type="Rhea" id="RHEA:30751"/>
        <dbReference type="ChEBI" id="CHEBI:7896"/>
        <dbReference type="ChEBI" id="CHEBI:30616"/>
        <dbReference type="ChEBI" id="CHEBI:33019"/>
        <dbReference type="ChEBI" id="CHEBI:57287"/>
        <dbReference type="ChEBI" id="CHEBI:57379"/>
        <dbReference type="ChEBI" id="CHEBI:456215"/>
    </reaction>
    <physiologicalReaction direction="left-to-right" evidence="5">
        <dbReference type="Rhea" id="RHEA:30752"/>
    </physiologicalReaction>
</comment>
<comment type="catalytic activity">
    <reaction evidence="5">
        <text>(9Z)-octadecenoate + ATP + CoA = (9Z)-octadecenoyl-CoA + AMP + diphosphate</text>
        <dbReference type="Rhea" id="RHEA:33607"/>
        <dbReference type="ChEBI" id="CHEBI:30616"/>
        <dbReference type="ChEBI" id="CHEBI:30823"/>
        <dbReference type="ChEBI" id="CHEBI:33019"/>
        <dbReference type="ChEBI" id="CHEBI:57287"/>
        <dbReference type="ChEBI" id="CHEBI:57387"/>
        <dbReference type="ChEBI" id="CHEBI:456215"/>
    </reaction>
    <physiologicalReaction direction="left-to-right" evidence="5">
        <dbReference type="Rhea" id="RHEA:33608"/>
    </physiologicalReaction>
</comment>
<comment type="catalytic activity">
    <reaction evidence="5">
        <text>octadecanoate + ATP + CoA = octadecanoyl-CoA + AMP + diphosphate</text>
        <dbReference type="Rhea" id="RHEA:33615"/>
        <dbReference type="ChEBI" id="CHEBI:25629"/>
        <dbReference type="ChEBI" id="CHEBI:30616"/>
        <dbReference type="ChEBI" id="CHEBI:33019"/>
        <dbReference type="ChEBI" id="CHEBI:57287"/>
        <dbReference type="ChEBI" id="CHEBI:57394"/>
        <dbReference type="ChEBI" id="CHEBI:456215"/>
    </reaction>
    <physiologicalReaction direction="left-to-right" evidence="5">
        <dbReference type="Rhea" id="RHEA:33616"/>
    </physiologicalReaction>
</comment>
<comment type="catalytic activity">
    <reaction evidence="5">
        <text>tetradecanoate + ATP + CoA = tetradecanoyl-CoA + AMP + diphosphate</text>
        <dbReference type="Rhea" id="RHEA:33619"/>
        <dbReference type="ChEBI" id="CHEBI:30616"/>
        <dbReference type="ChEBI" id="CHEBI:30807"/>
        <dbReference type="ChEBI" id="CHEBI:33019"/>
        <dbReference type="ChEBI" id="CHEBI:57287"/>
        <dbReference type="ChEBI" id="CHEBI:57385"/>
        <dbReference type="ChEBI" id="CHEBI:456215"/>
    </reaction>
    <physiologicalReaction direction="left-to-right" evidence="5">
        <dbReference type="Rhea" id="RHEA:33620"/>
    </physiologicalReaction>
</comment>
<comment type="catalytic activity">
    <reaction evidence="5">
        <text>(9Z,12Z)-octadecadienoate + ATP + CoA = (9Z,12Z)-octadecadienoyl-CoA + AMP + diphosphate</text>
        <dbReference type="Rhea" id="RHEA:33651"/>
        <dbReference type="ChEBI" id="CHEBI:30245"/>
        <dbReference type="ChEBI" id="CHEBI:30616"/>
        <dbReference type="ChEBI" id="CHEBI:33019"/>
        <dbReference type="ChEBI" id="CHEBI:57287"/>
        <dbReference type="ChEBI" id="CHEBI:57383"/>
        <dbReference type="ChEBI" id="CHEBI:456215"/>
    </reaction>
    <physiologicalReaction direction="left-to-right" evidence="5">
        <dbReference type="Rhea" id="RHEA:33652"/>
    </physiologicalReaction>
</comment>
<comment type="catalytic activity">
    <reaction evidence="5">
        <text>hexanoate + ATP + CoA = hexanoyl-CoA + AMP + diphosphate</text>
        <dbReference type="Rhea" id="RHEA:43740"/>
        <dbReference type="ChEBI" id="CHEBI:17120"/>
        <dbReference type="ChEBI" id="CHEBI:30616"/>
        <dbReference type="ChEBI" id="CHEBI:33019"/>
        <dbReference type="ChEBI" id="CHEBI:57287"/>
        <dbReference type="ChEBI" id="CHEBI:62620"/>
        <dbReference type="ChEBI" id="CHEBI:456215"/>
    </reaction>
    <physiologicalReaction direction="left-to-right" evidence="5">
        <dbReference type="Rhea" id="RHEA:43741"/>
    </physiologicalReaction>
</comment>
<comment type="catalytic activity">
    <reaction evidence="5">
        <text>heptanoate + ATP + CoA = heptanoyl-CoA + AMP + diphosphate</text>
        <dbReference type="Rhea" id="RHEA:44088"/>
        <dbReference type="ChEBI" id="CHEBI:30616"/>
        <dbReference type="ChEBI" id="CHEBI:32362"/>
        <dbReference type="ChEBI" id="CHEBI:33019"/>
        <dbReference type="ChEBI" id="CHEBI:57287"/>
        <dbReference type="ChEBI" id="CHEBI:78811"/>
        <dbReference type="ChEBI" id="CHEBI:456215"/>
    </reaction>
    <physiologicalReaction direction="left-to-right" evidence="5">
        <dbReference type="Rhea" id="RHEA:44089"/>
    </physiologicalReaction>
</comment>
<comment type="catalytic activity">
    <reaction evidence="5">
        <text>(9Z,12Z,15Z)-octadecatrienoate + ATP + CoA = (9Z,12Z,15Z)-octadecatrienoyl-CoA + AMP + diphosphate</text>
        <dbReference type="Rhea" id="RHEA:44936"/>
        <dbReference type="ChEBI" id="CHEBI:30616"/>
        <dbReference type="ChEBI" id="CHEBI:32387"/>
        <dbReference type="ChEBI" id="CHEBI:33019"/>
        <dbReference type="ChEBI" id="CHEBI:57287"/>
        <dbReference type="ChEBI" id="CHEBI:74034"/>
        <dbReference type="ChEBI" id="CHEBI:456215"/>
    </reaction>
    <physiologicalReaction direction="left-to-right" evidence="5">
        <dbReference type="Rhea" id="RHEA:44937"/>
    </physiologicalReaction>
</comment>
<comment type="catalytic activity">
    <reaction evidence="5">
        <text>OPC-6 + ATP + CoA = OPC-6-CoA + AMP + diphosphate</text>
        <dbReference type="Rhea" id="RHEA:54956"/>
        <dbReference type="ChEBI" id="CHEBI:30616"/>
        <dbReference type="ChEBI" id="CHEBI:33019"/>
        <dbReference type="ChEBI" id="CHEBI:57287"/>
        <dbReference type="ChEBI" id="CHEBI:138430"/>
        <dbReference type="ChEBI" id="CHEBI:138431"/>
        <dbReference type="ChEBI" id="CHEBI:456215"/>
    </reaction>
    <physiologicalReaction direction="left-to-right" evidence="5">
        <dbReference type="Rhea" id="RHEA:54957"/>
    </physiologicalReaction>
</comment>
<comment type="cofactor">
    <cofactor evidence="1">
        <name>Mg(2+)</name>
        <dbReference type="ChEBI" id="CHEBI:18420"/>
    </cofactor>
</comment>
<comment type="biophysicochemical properties">
    <kinetics>
        <KM evidence="4 5">75 uM for hexanoate</KM>
        <KM evidence="4 5">6 uM for nonanoate</KM>
        <KM evidence="4 5">54 uM for tetradecanoate</KM>
        <KM evidence="4 5">93 uM for OPDA</KM>
        <KM evidence="4 5">187 uM for OPC-6:0</KM>
        <text evidence="4 5">kcat is 1.26 sec(-1) with hexanoate as substrate (PubMed:15677481, PubMed:18267944). kcat is 1.38 sec(-1) with nonanoate as substrate (PubMed:15677481, PubMed:18267944). kcat is 2.31 sec(-1) with tetradecanoate as substrate (PubMed:15677481, PubMed:18267944). kcat is 0.3 sec(-1) with OPDA as substrate (PubMed:15677481, PubMed:18267944). kcat is 0.41 sec(-1) with OPC-6:0 as substrate (PubMed:15677481, PubMed:18267944).</text>
    </kinetics>
</comment>
<comment type="subcellular location">
    <subcellularLocation>
        <location evidence="4">Peroxisome</location>
    </subcellularLocation>
</comment>
<comment type="tissue specificity">
    <text evidence="5">Expressed at low level in leaves.</text>
</comment>
<comment type="induction">
    <text evidence="4">By methyl jasmonate.</text>
</comment>
<comment type="domain">
    <text evidence="2">Both substrate-binding domains (SBD1 and SBD2) are involved in the substrate recognition, and are sufficient to confer the substrate specificity.</text>
</comment>
<comment type="disruption phenotype">
    <text evidence="5">No obvious phenotype in growth, root and flower development, fertility, reproduction and morphology.</text>
</comment>
<comment type="similarity">
    <text evidence="7">Belongs to the ATP-dependent AMP-binding enzyme family.</text>
</comment>
<name>4CLL7_ARATH</name>
<organism>
    <name type="scientific">Arabidopsis thaliana</name>
    <name type="common">Mouse-ear cress</name>
    <dbReference type="NCBI Taxonomy" id="3702"/>
    <lineage>
        <taxon>Eukaryota</taxon>
        <taxon>Viridiplantae</taxon>
        <taxon>Streptophyta</taxon>
        <taxon>Embryophyta</taxon>
        <taxon>Tracheophyta</taxon>
        <taxon>Spermatophyta</taxon>
        <taxon>Magnoliopsida</taxon>
        <taxon>eudicotyledons</taxon>
        <taxon>Gunneridae</taxon>
        <taxon>Pentapetalae</taxon>
        <taxon>rosids</taxon>
        <taxon>malvids</taxon>
        <taxon>Brassicales</taxon>
        <taxon>Brassicaceae</taxon>
        <taxon>Camelineae</taxon>
        <taxon>Arabidopsis</taxon>
    </lineage>
</organism>
<accession>Q9M0X9</accession>
<gene>
    <name evidence="6" type="primary">4CLL7</name>
    <name evidence="8" type="ordered locus">At4g05160</name>
    <name evidence="9" type="ORF">C17L7.80</name>
</gene>
<protein>
    <recommendedName>
        <fullName evidence="6">4-coumarate--CoA ligase-like 7</fullName>
        <ecNumber evidence="4 5">6.2.1.-</ecNumber>
    </recommendedName>
    <alternativeName>
        <fullName>4-coumarate--CoA ligase isoform 6</fullName>
        <shortName>At4CL6</shortName>
    </alternativeName>
</protein>